<protein>
    <recommendedName>
        <fullName>TATA-box-binding protein 2</fullName>
    </recommendedName>
    <alternativeName>
        <fullName>TATA sequence-binding protein 2</fullName>
        <shortName>TBP-2</shortName>
    </alternativeName>
    <alternativeName>
        <fullName>TATA-binding factor 2</fullName>
    </alternativeName>
    <alternativeName>
        <fullName>TATA-box factor 2</fullName>
    </alternativeName>
    <alternativeName>
        <fullName>Transcription initiation factor TFIID TBP-2 subunit</fullName>
    </alternativeName>
</protein>
<gene>
    <name type="primary">TBP2</name>
    <name type="synonym">TFIID</name>
</gene>
<evidence type="ECO:0000305" key="1"/>
<name>TBP2_WHEAT</name>
<organism>
    <name type="scientific">Triticum aestivum</name>
    <name type="common">Wheat</name>
    <dbReference type="NCBI Taxonomy" id="4565"/>
    <lineage>
        <taxon>Eukaryota</taxon>
        <taxon>Viridiplantae</taxon>
        <taxon>Streptophyta</taxon>
        <taxon>Embryophyta</taxon>
        <taxon>Tracheophyta</taxon>
        <taxon>Spermatophyta</taxon>
        <taxon>Magnoliopsida</taxon>
        <taxon>Liliopsida</taxon>
        <taxon>Poales</taxon>
        <taxon>Poaceae</taxon>
        <taxon>BOP clade</taxon>
        <taxon>Pooideae</taxon>
        <taxon>Triticodae</taxon>
        <taxon>Triticeae</taxon>
        <taxon>Triticinae</taxon>
        <taxon>Triticum</taxon>
    </lineage>
</organism>
<accession>Q02879</accession>
<keyword id="KW-0238">DNA-binding</keyword>
<keyword id="KW-0539">Nucleus</keyword>
<keyword id="KW-1185">Reference proteome</keyword>
<keyword id="KW-0677">Repeat</keyword>
<keyword id="KW-0804">Transcription</keyword>
<reference key="1">
    <citation type="journal article" date="1993" name="Nucleic Acids Res.">
        <title>Wheat TFIID TATA binding protein.</title>
        <authorList>
            <person name="Apsit V."/>
            <person name="Freeberg J.A."/>
            <person name="Chase M.R."/>
            <person name="Davis E.A."/>
            <person name="Ackerman S.J."/>
        </authorList>
    </citation>
    <scope>NUCLEOTIDE SEQUENCE [MRNA]</scope>
</reference>
<comment type="function">
    <text>General transcription factor that functions at the core of the DNA-binding multiprotein factor TFIID. Binding of TFIID to the TATA box is the initial transcriptional step of the pre-initiation complex (PIC), playing a role in the activation of eukaryotic genes transcribed by RNA polymerase II.</text>
</comment>
<comment type="subunit">
    <text>Belongs to the TFIID complex together with the TBP-associated factors (TAFs). Binds DNA as monomer.</text>
</comment>
<comment type="subcellular location">
    <subcellularLocation>
        <location>Nucleus</location>
    </subcellularLocation>
</comment>
<comment type="similarity">
    <text evidence="1">Belongs to the TBP family.</text>
</comment>
<feature type="chain" id="PRO_0000153986" description="TATA-box-binding protein 2">
    <location>
        <begin position="1"/>
        <end position="201"/>
    </location>
</feature>
<feature type="repeat" description="1">
    <location>
        <begin position="26"/>
        <end position="102"/>
    </location>
</feature>
<feature type="repeat" description="2">
    <location>
        <begin position="116"/>
        <end position="193"/>
    </location>
</feature>
<proteinExistence type="evidence at transcript level"/>
<dbReference type="EMBL" id="Z18804">
    <property type="protein sequence ID" value="CAA79268.1"/>
    <property type="molecule type" value="mRNA"/>
</dbReference>
<dbReference type="EMBL" id="L07604">
    <property type="protein sequence ID" value="AAA34307.1"/>
    <property type="molecule type" value="mRNA"/>
</dbReference>
<dbReference type="PIR" id="S30216">
    <property type="entry name" value="S30216"/>
</dbReference>
<dbReference type="SMR" id="Q02879"/>
<dbReference type="STRING" id="4565.Q02879"/>
<dbReference type="PaxDb" id="4565-Traes_4BS_4F52653D8.1"/>
<dbReference type="eggNOG" id="KOG3302">
    <property type="taxonomic scope" value="Eukaryota"/>
</dbReference>
<dbReference type="Proteomes" id="UP000019116">
    <property type="component" value="Unplaced"/>
</dbReference>
<dbReference type="ExpressionAtlas" id="Q02879">
    <property type="expression patterns" value="baseline"/>
</dbReference>
<dbReference type="GO" id="GO:0005634">
    <property type="term" value="C:nucleus"/>
    <property type="evidence" value="ECO:0007669"/>
    <property type="project" value="UniProtKB-SubCell"/>
</dbReference>
<dbReference type="GO" id="GO:0003677">
    <property type="term" value="F:DNA binding"/>
    <property type="evidence" value="ECO:0007669"/>
    <property type="project" value="UniProtKB-KW"/>
</dbReference>
<dbReference type="GO" id="GO:0016251">
    <property type="term" value="F:RNA polymerase II general transcription initiation factor activity"/>
    <property type="evidence" value="ECO:0000318"/>
    <property type="project" value="GO_Central"/>
</dbReference>
<dbReference type="GO" id="GO:0006352">
    <property type="term" value="P:DNA-templated transcription initiation"/>
    <property type="evidence" value="ECO:0000318"/>
    <property type="project" value="GO_Central"/>
</dbReference>
<dbReference type="CDD" id="cd04516">
    <property type="entry name" value="TBP_eukaryotes"/>
    <property type="match status" value="1"/>
</dbReference>
<dbReference type="FunFam" id="3.30.310.10:FF:000001">
    <property type="entry name" value="TATA-box-binding protein 2"/>
    <property type="match status" value="1"/>
</dbReference>
<dbReference type="FunFam" id="3.30.310.10:FF:000002">
    <property type="entry name" value="TATA-box-binding protein 2"/>
    <property type="match status" value="1"/>
</dbReference>
<dbReference type="Gene3D" id="3.30.310.10">
    <property type="entry name" value="TATA-Binding Protein"/>
    <property type="match status" value="2"/>
</dbReference>
<dbReference type="HAMAP" id="MF_00408">
    <property type="entry name" value="TATA_bind_prot_arch"/>
    <property type="match status" value="1"/>
</dbReference>
<dbReference type="InterPro" id="IPR000814">
    <property type="entry name" value="TBP"/>
</dbReference>
<dbReference type="InterPro" id="IPR030491">
    <property type="entry name" value="TBP_CS"/>
</dbReference>
<dbReference type="InterPro" id="IPR012295">
    <property type="entry name" value="TBP_dom_sf"/>
</dbReference>
<dbReference type="InterPro" id="IPR033710">
    <property type="entry name" value="TBP_eukaryotic"/>
</dbReference>
<dbReference type="PANTHER" id="PTHR10126">
    <property type="entry name" value="TATA-BOX BINDING PROTEIN"/>
    <property type="match status" value="1"/>
</dbReference>
<dbReference type="Pfam" id="PF00352">
    <property type="entry name" value="TBP"/>
    <property type="match status" value="2"/>
</dbReference>
<dbReference type="PRINTS" id="PR00686">
    <property type="entry name" value="TIFACTORIID"/>
</dbReference>
<dbReference type="SUPFAM" id="SSF55945">
    <property type="entry name" value="TATA-box binding protein-like"/>
    <property type="match status" value="2"/>
</dbReference>
<dbReference type="PROSITE" id="PS00351">
    <property type="entry name" value="TFIID"/>
    <property type="match status" value="2"/>
</dbReference>
<sequence>MAEAAALEGSEPVDLTKHPSGIIPTLQNIVSTVNLDCKLDLKAIALQARNAEYNPKRFAAVIMRIREPKTTALIFASGKMVCTGAKSEQQSKLAARKYARIIQKLGFPAKFKDFKIQNIVASCDVKFPIRLEGLAYSHGAFSSYEPELFPGLIYRMRQPKIVLLIFVSGKIVLTGAKVREETYSAFENIYPVLTEFRKVQQ</sequence>